<feature type="chain" id="PRO_0000291583" description="Transforming growth factor beta-1-induced transcript 1 protein">
    <location>
        <begin position="1"/>
        <end position="461"/>
    </location>
</feature>
<feature type="domain" description="LIM zinc-binding 1" evidence="4">
    <location>
        <begin position="226"/>
        <end position="285"/>
    </location>
</feature>
<feature type="domain" description="LIM zinc-binding 2" evidence="4">
    <location>
        <begin position="286"/>
        <end position="343"/>
    </location>
</feature>
<feature type="domain" description="LIM zinc-binding 3" evidence="4">
    <location>
        <begin position="344"/>
        <end position="403"/>
    </location>
</feature>
<feature type="domain" description="LIM zinc-binding 4" evidence="4">
    <location>
        <begin position="404"/>
        <end position="461"/>
    </location>
</feature>
<feature type="region of interest" description="Interaction with PTK2B/PYK2" evidence="1">
    <location>
        <begin position="1"/>
        <end position="240"/>
    </location>
</feature>
<feature type="region of interest" description="Transcription activation">
    <location>
        <begin position="1"/>
        <end position="200"/>
    </location>
</feature>
<feature type="region of interest" description="Disordered" evidence="5">
    <location>
        <begin position="1"/>
        <end position="87"/>
    </location>
</feature>
<feature type="region of interest" description="Interaction with PTK2/FAK1">
    <location>
        <begin position="83"/>
        <end position="136"/>
    </location>
</feature>
<feature type="region of interest" description="Disordered" evidence="5">
    <location>
        <begin position="116"/>
        <end position="154"/>
    </location>
</feature>
<feature type="region of interest" description="Disordered" evidence="5">
    <location>
        <begin position="171"/>
        <end position="204"/>
    </location>
</feature>
<feature type="short sequence motif" description="LD motif 1">
    <location>
        <begin position="3"/>
        <end position="15"/>
    </location>
</feature>
<feature type="short sequence motif" description="LD motif 2">
    <location>
        <begin position="92"/>
        <end position="104"/>
    </location>
</feature>
<feature type="short sequence motif" description="LD motif 3">
    <location>
        <begin position="157"/>
        <end position="168"/>
    </location>
</feature>
<feature type="short sequence motif" description="LD motif 4">
    <location>
        <begin position="203"/>
        <end position="215"/>
    </location>
</feature>
<feature type="compositionally biased region" description="Low complexity" evidence="5">
    <location>
        <begin position="44"/>
        <end position="53"/>
    </location>
</feature>
<feature type="compositionally biased region" description="Pro residues" evidence="5">
    <location>
        <begin position="137"/>
        <end position="147"/>
    </location>
</feature>
<feature type="modified residue" description="N-acetylmethionine" evidence="2">
    <location>
        <position position="1"/>
    </location>
</feature>
<feature type="modified residue" description="Phosphothreonine" evidence="2">
    <location>
        <position position="33"/>
    </location>
</feature>
<feature type="modified residue" description="Phosphotyrosine" evidence="23">
    <location>
        <position position="38"/>
    </location>
</feature>
<feature type="modified residue" description="Phosphotyrosine" evidence="23">
    <location>
        <position position="60"/>
    </location>
</feature>
<feature type="modified residue" description="Phosphoserine" evidence="42">
    <location>
        <position position="68"/>
    </location>
</feature>
<feature type="modified residue" description="Phosphoserine" evidence="2">
    <location>
        <position position="141"/>
    </location>
</feature>
<feature type="modified residue" description="Phosphoserine" evidence="2">
    <location>
        <position position="164"/>
    </location>
</feature>
<feature type="modified residue" description="Phosphoserine" evidence="42">
    <location>
        <position position="186"/>
    </location>
</feature>
<feature type="modified residue" description="Phosphothreonine" evidence="42">
    <location>
        <position position="188"/>
    </location>
</feature>
<feature type="modified residue" description="Phosphoserine" evidence="42">
    <location>
        <position position="194"/>
    </location>
</feature>
<feature type="modified residue" description="Phosphoserine" evidence="42">
    <location>
        <position position="403"/>
    </location>
</feature>
<feature type="modified residue" description="Phosphothreonine" evidence="2">
    <location>
        <position position="407"/>
    </location>
</feature>
<feature type="splice variant" id="VSP_026184" description="In isoform 7." evidence="39">
    <location>
        <begin position="1"/>
        <end position="111"/>
    </location>
</feature>
<feature type="splice variant" id="VSP_026185" description="In isoform 10." evidence="39">
    <location>
        <begin position="1"/>
        <end position="110"/>
    </location>
</feature>
<feature type="splice variant" id="VSP_026188" description="In isoform 9." evidence="39">
    <location>
        <begin position="1"/>
        <end position="62"/>
    </location>
</feature>
<feature type="splice variant" id="VSP_026189" description="In isoform 5." evidence="39">
    <location>
        <begin position="1"/>
        <end position="59"/>
    </location>
</feature>
<feature type="splice variant" id="VSP_026190" description="In isoform 3." evidence="39">
    <original>MEDLDALLSDLETTTSHMSRLGAPKERPPETLTPPPPYGHQPQ</original>
    <variation>MSPCSPFIAPPPPTVSQRVPASIHGHGPASNSLTSPPSPSSAPTGHGPRPTLPKLSASAPPWRTW</variation>
    <location>
        <begin position="1"/>
        <end position="43"/>
    </location>
</feature>
<feature type="splice variant" id="VSP_026191" description="In isoform 2 and isoform 8." evidence="37 39 40">
    <location>
        <begin position="1"/>
        <end position="17"/>
    </location>
</feature>
<feature type="splice variant" id="VSP_026192" description="In isoform 5." evidence="39">
    <original>YSTVCKPRSPKPVAPVAPPFSSS</original>
    <variation>MATSHRQGLENLQEPLGTRIIYT</variation>
    <location>
        <begin position="60"/>
        <end position="82"/>
    </location>
</feature>
<feature type="splice variant" id="VSP_039813" description="In isoform 6 and isoform 8." evidence="38 39">
    <original>S</original>
    <variation>R</variation>
    <location>
        <position position="61"/>
    </location>
</feature>
<feature type="splice variant" id="VSP_039814" description="In isoform 6 and isoform 8." evidence="38 39">
    <location>
        <begin position="62"/>
        <end position="461"/>
    </location>
</feature>
<feature type="splice variant" id="VSP_026193" description="In isoform 4." evidence="39">
    <location>
        <begin position="62"/>
        <end position="107"/>
    </location>
</feature>
<feature type="splice variant" id="VSP_026194" description="In isoform 9." evidence="39">
    <original>VCKPRSPKPVAPVAPPFSSSSGVLGNGLCELDRLLQELNATQFNITDEIMSQFPSSKMAEGEEKEDQSEDKSSPTV</original>
    <variation>MPPSSTLQMKSCLSSHLVKWLKGKRRRTNLKTRAHPLCEFGRVGRAGKRMMGPACLTYQRGVRLAGSEVIHGVLHN</variation>
    <location>
        <begin position="63"/>
        <end position="138"/>
    </location>
</feature>
<feature type="splice variant" id="VSP_026197" description="In isoform 10." evidence="39">
    <original>IMSQFPSSKMAEGEEKEDQSEDKSSPTVPPSPFPAPSK</original>
    <variation>MPPSSTLQMKSCLSSHLVKWLKGKRRRTNLKTRAHPLS</variation>
    <location>
        <begin position="111"/>
        <end position="148"/>
    </location>
</feature>
<feature type="mutagenesis site" description="Reduced phosphorylation. Loss of phosphorylation; when associated with F-60." evidence="23">
    <original>Y</original>
    <variation>F</variation>
    <location>
        <position position="38"/>
    </location>
</feature>
<feature type="mutagenesis site" description="Reduced phosphorylation. Loss of phosphorylation; when associated with F-38." evidence="23">
    <original>Y</original>
    <variation>F</variation>
    <location>
        <position position="60"/>
    </location>
</feature>
<feature type="mutagenesis site" description="Increase in nuclear localization." evidence="19">
    <original>C</original>
    <variation>N</variation>
    <location>
        <position position="64"/>
    </location>
</feature>
<feature type="mutagenesis site" description="Increase in nuclear localization." evidence="19">
    <original>C</original>
    <variation>S</variation>
    <location>
        <position position="91"/>
    </location>
</feature>
<feature type="mutagenesis site" description="Increase in nuclear localization." evidence="19">
    <original>L</original>
    <variation>A</variation>
    <location>
        <position position="161"/>
    </location>
</feature>
<feature type="mutagenesis site" description="Loss of interaction with PTPN12; when associated with G-369." evidence="6">
    <original>H</original>
    <variation>G</variation>
    <location>
        <position position="366"/>
    </location>
</feature>
<feature type="mutagenesis site" description="Loss of localization to focal adhesion; when associated with A-372." evidence="6 23">
    <original>C</original>
    <variation>A</variation>
    <location>
        <position position="369"/>
    </location>
</feature>
<feature type="mutagenesis site" description="Loss of interaction with PTPN12; when associated with G-366." evidence="6 23">
    <original>C</original>
    <variation>G</variation>
    <location>
        <position position="369"/>
    </location>
</feature>
<feature type="mutagenesis site" description="Loss of localization to focal adhesion; when associated with A-369." evidence="23">
    <original>C</original>
    <variation>A</variation>
    <location>
        <position position="372"/>
    </location>
</feature>
<proteinExistence type="evidence at protein level"/>
<protein>
    <recommendedName>
        <fullName>Transforming growth factor beta-1-induced transcript 1 protein</fullName>
    </recommendedName>
    <alternativeName>
        <fullName>Androgen receptor-associated protein of 55 kDa</fullName>
    </alternativeName>
    <alternativeName>
        <fullName>Hydrogen peroxide-inducible clone 5 protein</fullName>
        <shortName>Hic-5</shortName>
    </alternativeName>
    <alternativeName>
        <fullName>TGF beta-stimulated clone 5</fullName>
        <shortName>TSC-5</shortName>
    </alternativeName>
</protein>
<gene>
    <name type="primary">Tgfb1i1</name>
    <name type="synonym">Ara55</name>
</gene>
<accession>Q62219</accession>
<accession>Q3YBY7</accession>
<accession>Q3YBY8</accession>
<accession>Q3YBZ0</accession>
<accession>Q3YBZ1</accession>
<accession>Q3YBZ3</accession>
<accession>Q3YBZ4</accession>
<accession>Q3YBZ5</accession>
<accession>Q3YBZ6</accession>
<reference key="1">
    <citation type="journal article" date="1994" name="J. Biol. Chem.">
        <title>Characterization of the TGF beta 1-inducible hic-5 gene that encodes a putative novel zinc finger protein and its possible involvement in cellular senescence.</title>
        <authorList>
            <person name="Shibanuma M."/>
            <person name="Mashimo J.I."/>
            <person name="Kuroki T."/>
            <person name="Nose K."/>
        </authorList>
    </citation>
    <scope>NUCLEOTIDE SEQUENCE [MRNA] (ISOFORM 2)</scope>
    <scope>FUNCTION</scope>
    <scope>INDUCTION BY TGFB1 AND HYDROGEN PEROXIDE</scope>
    <scope>TISSUE SPECIFICITY</scope>
    <source>
        <tissue>Calvaria</tissue>
    </source>
</reference>
<reference key="2">
    <citation type="journal article" date="2000" name="Gene">
        <title>Genomic structure and chromosomal mapping of the mouse hic-5 gene that encodes a focal adhesion protein.</title>
        <authorList>
            <person name="Mashimo J.I."/>
            <person name="Shibanuma M."/>
            <person name="Satoh H."/>
            <person name="Chida K."/>
            <person name="Nose K."/>
        </authorList>
    </citation>
    <scope>NUCLEOTIDE SEQUENCE [GENOMIC DNA]</scope>
</reference>
<reference key="3">
    <citation type="journal article" date="2005" name="FEBS Lett.">
        <title>Identification and analysis of Hic-5/ARA55 isoforms: implications for integrin signaling and steroid hormone action.</title>
        <authorList>
            <person name="Gao Z."/>
            <person name="Schwartz L.M."/>
        </authorList>
    </citation>
    <scope>NUCLEOTIDE SEQUENCE [MRNA] (ISOFORMS 3; 4; 5; 6; 7; 8; 9 AND 10)</scope>
    <scope>TISSUE SPECIFICITY</scope>
    <source>
        <strain>BALB/cJ</strain>
    </source>
</reference>
<reference key="4">
    <citation type="journal article" date="2005" name="Science">
        <title>The transcriptional landscape of the mammalian genome.</title>
        <authorList>
            <person name="Carninci P."/>
            <person name="Kasukawa T."/>
            <person name="Katayama S."/>
            <person name="Gough J."/>
            <person name="Frith M.C."/>
            <person name="Maeda N."/>
            <person name="Oyama R."/>
            <person name="Ravasi T."/>
            <person name="Lenhard B."/>
            <person name="Wells C."/>
            <person name="Kodzius R."/>
            <person name="Shimokawa K."/>
            <person name="Bajic V.B."/>
            <person name="Brenner S.E."/>
            <person name="Batalov S."/>
            <person name="Forrest A.R."/>
            <person name="Zavolan M."/>
            <person name="Davis M.J."/>
            <person name="Wilming L.G."/>
            <person name="Aidinis V."/>
            <person name="Allen J.E."/>
            <person name="Ambesi-Impiombato A."/>
            <person name="Apweiler R."/>
            <person name="Aturaliya R.N."/>
            <person name="Bailey T.L."/>
            <person name="Bansal M."/>
            <person name="Baxter L."/>
            <person name="Beisel K.W."/>
            <person name="Bersano T."/>
            <person name="Bono H."/>
            <person name="Chalk A.M."/>
            <person name="Chiu K.P."/>
            <person name="Choudhary V."/>
            <person name="Christoffels A."/>
            <person name="Clutterbuck D.R."/>
            <person name="Crowe M.L."/>
            <person name="Dalla E."/>
            <person name="Dalrymple B.P."/>
            <person name="de Bono B."/>
            <person name="Della Gatta G."/>
            <person name="di Bernardo D."/>
            <person name="Down T."/>
            <person name="Engstrom P."/>
            <person name="Fagiolini M."/>
            <person name="Faulkner G."/>
            <person name="Fletcher C.F."/>
            <person name="Fukushima T."/>
            <person name="Furuno M."/>
            <person name="Futaki S."/>
            <person name="Gariboldi M."/>
            <person name="Georgii-Hemming P."/>
            <person name="Gingeras T.R."/>
            <person name="Gojobori T."/>
            <person name="Green R.E."/>
            <person name="Gustincich S."/>
            <person name="Harbers M."/>
            <person name="Hayashi Y."/>
            <person name="Hensch T.K."/>
            <person name="Hirokawa N."/>
            <person name="Hill D."/>
            <person name="Huminiecki L."/>
            <person name="Iacono M."/>
            <person name="Ikeo K."/>
            <person name="Iwama A."/>
            <person name="Ishikawa T."/>
            <person name="Jakt M."/>
            <person name="Kanapin A."/>
            <person name="Katoh M."/>
            <person name="Kawasawa Y."/>
            <person name="Kelso J."/>
            <person name="Kitamura H."/>
            <person name="Kitano H."/>
            <person name="Kollias G."/>
            <person name="Krishnan S.P."/>
            <person name="Kruger A."/>
            <person name="Kummerfeld S.K."/>
            <person name="Kurochkin I.V."/>
            <person name="Lareau L.F."/>
            <person name="Lazarevic D."/>
            <person name="Lipovich L."/>
            <person name="Liu J."/>
            <person name="Liuni S."/>
            <person name="McWilliam S."/>
            <person name="Madan Babu M."/>
            <person name="Madera M."/>
            <person name="Marchionni L."/>
            <person name="Matsuda H."/>
            <person name="Matsuzawa S."/>
            <person name="Miki H."/>
            <person name="Mignone F."/>
            <person name="Miyake S."/>
            <person name="Morris K."/>
            <person name="Mottagui-Tabar S."/>
            <person name="Mulder N."/>
            <person name="Nakano N."/>
            <person name="Nakauchi H."/>
            <person name="Ng P."/>
            <person name="Nilsson R."/>
            <person name="Nishiguchi S."/>
            <person name="Nishikawa S."/>
            <person name="Nori F."/>
            <person name="Ohara O."/>
            <person name="Okazaki Y."/>
            <person name="Orlando V."/>
            <person name="Pang K.C."/>
            <person name="Pavan W.J."/>
            <person name="Pavesi G."/>
            <person name="Pesole G."/>
            <person name="Petrovsky N."/>
            <person name="Piazza S."/>
            <person name="Reed J."/>
            <person name="Reid J.F."/>
            <person name="Ring B.Z."/>
            <person name="Ringwald M."/>
            <person name="Rost B."/>
            <person name="Ruan Y."/>
            <person name="Salzberg S.L."/>
            <person name="Sandelin A."/>
            <person name="Schneider C."/>
            <person name="Schoenbach C."/>
            <person name="Sekiguchi K."/>
            <person name="Semple C.A."/>
            <person name="Seno S."/>
            <person name="Sessa L."/>
            <person name="Sheng Y."/>
            <person name="Shibata Y."/>
            <person name="Shimada H."/>
            <person name="Shimada K."/>
            <person name="Silva D."/>
            <person name="Sinclair B."/>
            <person name="Sperling S."/>
            <person name="Stupka E."/>
            <person name="Sugiura K."/>
            <person name="Sultana R."/>
            <person name="Takenaka Y."/>
            <person name="Taki K."/>
            <person name="Tammoja K."/>
            <person name="Tan S.L."/>
            <person name="Tang S."/>
            <person name="Taylor M.S."/>
            <person name="Tegner J."/>
            <person name="Teichmann S.A."/>
            <person name="Ueda H.R."/>
            <person name="van Nimwegen E."/>
            <person name="Verardo R."/>
            <person name="Wei C.L."/>
            <person name="Yagi K."/>
            <person name="Yamanishi H."/>
            <person name="Zabarovsky E."/>
            <person name="Zhu S."/>
            <person name="Zimmer A."/>
            <person name="Hide W."/>
            <person name="Bult C."/>
            <person name="Grimmond S.M."/>
            <person name="Teasdale R.D."/>
            <person name="Liu E.T."/>
            <person name="Brusic V."/>
            <person name="Quackenbush J."/>
            <person name="Wahlestedt C."/>
            <person name="Mattick J.S."/>
            <person name="Hume D.A."/>
            <person name="Kai C."/>
            <person name="Sasaki D."/>
            <person name="Tomaru Y."/>
            <person name="Fukuda S."/>
            <person name="Kanamori-Katayama M."/>
            <person name="Suzuki M."/>
            <person name="Aoki J."/>
            <person name="Arakawa T."/>
            <person name="Iida J."/>
            <person name="Imamura K."/>
            <person name="Itoh M."/>
            <person name="Kato T."/>
            <person name="Kawaji H."/>
            <person name="Kawagashira N."/>
            <person name="Kawashima T."/>
            <person name="Kojima M."/>
            <person name="Kondo S."/>
            <person name="Konno H."/>
            <person name="Nakano K."/>
            <person name="Ninomiya N."/>
            <person name="Nishio T."/>
            <person name="Okada M."/>
            <person name="Plessy C."/>
            <person name="Shibata K."/>
            <person name="Shiraki T."/>
            <person name="Suzuki S."/>
            <person name="Tagami M."/>
            <person name="Waki K."/>
            <person name="Watahiki A."/>
            <person name="Okamura-Oho Y."/>
            <person name="Suzuki H."/>
            <person name="Kawai J."/>
            <person name="Hayashizaki Y."/>
        </authorList>
    </citation>
    <scope>NUCLEOTIDE SEQUENCE [LARGE SCALE MRNA] (ISOFORMS 1 AND 6)</scope>
    <source>
        <strain>NOD</strain>
        <tissue>Inner ear</tissue>
        <tissue>Spleen</tissue>
    </source>
</reference>
<reference key="5">
    <citation type="journal article" date="2004" name="Genome Res.">
        <title>The status, quality, and expansion of the NIH full-length cDNA project: the Mammalian Gene Collection (MGC).</title>
        <authorList>
            <consortium name="The MGC Project Team"/>
        </authorList>
    </citation>
    <scope>NUCLEOTIDE SEQUENCE [LARGE SCALE MRNA] (ISOFORMS 1 AND 2)</scope>
    <source>
        <strain>C57BL/6J</strain>
        <tissue>Brain</tissue>
        <tissue>Mammary tumor</tissue>
    </source>
</reference>
<reference key="6">
    <citation type="journal article" date="1998" name="J. Biol. Chem.">
        <title>Cell adhesion kinase beta forms a complex with a new member, Hic-5, of proteins localized at focal adhesions.</title>
        <authorList>
            <person name="Matsuya M."/>
            <person name="Sasaki H."/>
            <person name="Aoto H."/>
            <person name="Mitaka T."/>
            <person name="Nagura K."/>
            <person name="Ohba T."/>
            <person name="Ishino M."/>
            <person name="Takahashi S."/>
            <person name="Suzuki R."/>
            <person name="Sasaki T."/>
        </authorList>
    </citation>
    <scope>INTERACTION WITH PTK2 AND PTK2B</scope>
</reference>
<reference key="7">
    <citation type="journal article" date="1998" name="J. Biol. Chem.">
        <title>Interaction of Hic-5, A senescence-related protein, with focal adhesion kinase.</title>
        <authorList>
            <person name="Fujita H."/>
            <person name="Kamiguchi K."/>
            <person name="Cho D."/>
            <person name="Shibanuma M."/>
            <person name="Morimoto C."/>
            <person name="Tachibana K."/>
        </authorList>
    </citation>
    <scope>INTERACTION WITH PTK2</scope>
</reference>
<reference key="8">
    <citation type="journal article" date="1998" name="Nucleic Acids Res.">
        <title>The LIM domains of hic-5 protein recognize specific DNA fragments in a zinc-dependent manner in vitro.</title>
        <authorList>
            <person name="Nishiya N."/>
            <person name="Sabe H."/>
            <person name="Nose K."/>
            <person name="Shibanuma M."/>
        </authorList>
    </citation>
    <scope>FUNCTION</scope>
</reference>
<reference key="9">
    <citation type="journal article" date="1999" name="J. Biol. Chem.">
        <title>Hic-5, a paxillin homologue, binds to the protein-tyrosine phosphatase PEST (PTP-PEST) through its LIM 3 domain.</title>
        <authorList>
            <person name="Nishiya N."/>
            <person name="Iwabuchi Y."/>
            <person name="Shibanuma M."/>
            <person name="Cote J.-F."/>
            <person name="Tremblay M.L."/>
            <person name="Nose K."/>
        </authorList>
    </citation>
    <scope>INTERACTION WITH PTPN12</scope>
    <scope>MUTAGENESIS OF HIS-366 AND CYS-369</scope>
</reference>
<reference key="10">
    <citation type="journal article" date="1999" name="J. Cell Biol.">
        <title>Paxillin LD4 motif binds PAK and PIX through a novel 95-kD ankyrin repeat, ARF-GAP protein: a role in cytoskeletal remodeling.</title>
        <authorList>
            <person name="Turner C.E."/>
            <person name="Brown M.C."/>
            <person name="Perrotta J.A."/>
            <person name="Riedy M.C."/>
            <person name="Nikolopoulos S.N."/>
            <person name="McDonald A.R."/>
            <person name="Bagrodia S."/>
            <person name="Thomas S.M."/>
            <person name="Leventhal P.S."/>
        </authorList>
    </citation>
    <scope>INTERACTION WITH ARHGEF7; GIT2; NCK2; PTK2 AND PAK</scope>
</reference>
<reference key="11">
    <citation type="journal article" date="1999" name="J. Cell Sci.">
        <title>Characterization of a focal adhesion protein, Hic-5, that shares extensive homology with paxillin.</title>
        <authorList>
            <person name="Thomas S.M."/>
            <person name="Hagel M."/>
            <person name="Turner C.E."/>
        </authorList>
    </citation>
    <scope>INTERACTION WITH CSK; PTK2 AND VCL</scope>
    <scope>SUBCELLULAR LOCATION</scope>
</reference>
<reference key="12">
    <citation type="journal article" date="2000" name="J. Cell. Biochem.">
        <title>Specific decrease in the level of Hic-5, a focal adhesion protein, during immortalization of mouse embryonic fibroblasts, and its association with focal adhesion kinase.</title>
        <authorList>
            <person name="Ishino K."/>
            <person name="Kim Kaneyama J.-R."/>
            <person name="Shibanuma M."/>
            <person name="Nose K."/>
        </authorList>
    </citation>
    <scope>FUNCTION</scope>
    <scope>SUBCELLULAR LOCATION</scope>
    <scope>INTERACTION WITH PTK2</scope>
</reference>
<reference key="13">
    <citation type="journal article" date="2000" name="J. Cell Biol.">
        <title>Actopaxin, a new focal adhesion protein that binds paxillin LD motifs and actin and regulates cell adhesion.</title>
        <authorList>
            <person name="Nikolopoulos S.N."/>
            <person name="Turner C.E."/>
        </authorList>
    </citation>
    <scope>INTERACTION WITH PARVA</scope>
</reference>
<reference key="14">
    <citation type="journal article" date="2000" name="Mol. Biol. Cell">
        <title>Interaction of the tau2 transcriptional activation domain of glucocorticoid receptor with a novel steroid receptor coactivator, Hic-5, which localizes to both focal adhesions and the nuclear matrix.</title>
        <authorList>
            <person name="Yang L."/>
            <person name="Guerrero J."/>
            <person name="Hong H."/>
            <person name="DeFranco D.B."/>
            <person name="Stallcup M.R."/>
        </authorList>
    </citation>
    <scope>FUNCTION</scope>
    <scope>INTERACTION WITH NR3C1</scope>
    <scope>SUBCELLULAR LOCATION</scope>
</reference>
<reference key="15">
    <citation type="journal article" date="2001" name="Dev. Biol.">
        <title>Novel cell lines promote the discovery of genes involved in early heart development.</title>
        <authorList>
            <person name="Brunskill E.W."/>
            <person name="Witte D.P."/>
            <person name="Yutzey K.E."/>
            <person name="Potter S.S."/>
        </authorList>
    </citation>
    <scope>DEVELOPMENTAL STAGE</scope>
</reference>
<reference key="16">
    <citation type="journal article" date="2001" name="J. Biol. Chem.">
        <title>Identification and characterization of hic-5/ARA55 as an hsp27 binding protein.</title>
        <authorList>
            <person name="Jia Y."/>
            <person name="Ransom R.F."/>
            <person name="Shibanuma M."/>
            <person name="Liu C."/>
            <person name="Welsh M.J."/>
            <person name="Smoyer W.E."/>
        </authorList>
    </citation>
    <scope>FUNCTION</scope>
    <scope>INTERACTION WITH HSPB1</scope>
</reference>
<reference key="17">
    <citation type="journal article" date="2001" name="Mol. Cell. Biol.">
        <title>Hic-5-reduced cell spreading on fibronectin: competitive effects between paxillin and Hic-5 through interaction with focal adhesion kinase.</title>
        <authorList>
            <person name="Nishiya N."/>
            <person name="Tachibana K."/>
            <person name="Shibanuma M."/>
            <person name="Mashimo J.I."/>
            <person name="Nose K."/>
        </authorList>
    </citation>
    <scope>FUNCTION</scope>
</reference>
<reference key="18">
    <citation type="journal article" date="2002" name="Cell Struct. Funct.">
        <title>Possible involvement of hic-5, a focal adhesion protein, in the differentiation of C2C12 myoblasts.</title>
        <authorList>
            <person name="Shibanuma M."/>
            <person name="Iwabuchi Y."/>
            <person name="Nose K."/>
        </authorList>
    </citation>
    <scope>FUNCTION</scope>
    <scope>DEVELOPMENTAL STAGE</scope>
</reference>
<reference key="19">
    <citation type="journal article" date="2002" name="J. Biochem.">
        <title>Hic-5 interacts with GIT1 with a different binding mode from paxillin.</title>
        <authorList>
            <person name="Nishiya N."/>
            <person name="Shirai T."/>
            <person name="Suzuki W."/>
            <person name="Nose K."/>
        </authorList>
    </citation>
    <scope>FUNCTION</scope>
    <scope>INTERACTION WITH GIT1 AND ARHGEF7</scope>
</reference>
<reference key="20">
    <citation type="journal article" date="2002" name="J. Biol. Chem.">
        <title>The FXXLF motif mediates androgen receptor-specific interactions with coregulators.</title>
        <authorList>
            <person name="He B."/>
            <person name="Minges J.T."/>
            <person name="Lee L.W."/>
            <person name="Wilson E.M."/>
        </authorList>
    </citation>
    <scope>INTERACTION WITH AR</scope>
</reference>
<reference key="21">
    <citation type="journal article" date="2002" name="J. Biol. Chem.">
        <title>Syndesmos, a syndecan-4 cytoplasmic domain interactor, binds to the focal adhesion adaptor proteins paxillin and Hic-5.</title>
        <authorList>
            <person name="Denhez F."/>
            <person name="Wilcox-Adelman S.A."/>
            <person name="Baciu P.C."/>
            <person name="Saoncella S."/>
            <person name="Lee S."/>
            <person name="French B."/>
            <person name="Neveu W."/>
            <person name="Goetinck P.F."/>
        </authorList>
    </citation>
    <scope>INTERACTION WITH NUDT16L1</scope>
</reference>
<reference key="22">
    <citation type="journal article" date="2002" name="J. Neurosci.">
        <title>The multiple LIM domain-containing adaptor protein Hic-5 synaptically colocalizes and interacts with the dopamine transporter.</title>
        <authorList>
            <person name="Carneiro A.M.D."/>
            <person name="Ingram S.L."/>
            <person name="Beaulieu J.-M."/>
            <person name="Sweeney A."/>
            <person name="Amara S.G."/>
            <person name="Thomas S.M."/>
            <person name="Caron M.G."/>
            <person name="Torres G.E."/>
        </authorList>
    </citation>
    <scope>INTERACTION WITH SLC6A3</scope>
    <scope>TISSUE SPECIFICITY</scope>
</reference>
<reference key="23">
    <citation type="journal article" date="2003" name="Mol. Biol. Cell">
        <title>Hic-5 communicates between focal adhesions and the nucleus through oxidant-sensitive nuclear export signal.</title>
        <authorList>
            <person name="Shibanuma M."/>
            <person name="Kim-Kaneyama J.-R."/>
            <person name="Ishino K."/>
            <person name="Sakamoto N."/>
            <person name="Hishiki T."/>
            <person name="Yamaguchi K."/>
            <person name="Mori K."/>
            <person name="Mashimo J.I."/>
            <person name="Nose K."/>
        </authorList>
    </citation>
    <scope>SUBCELLULAR LOCATION</scope>
    <scope>MUTAGENESIS OF CYS-64; CYS-91 AND LEU-161</scope>
</reference>
<reference key="24">
    <citation type="journal article" date="2004" name="J. Cell. Biochem.">
        <title>A LIM protein, Hic-5, functions as a potential coactivator for Sp1.</title>
        <authorList>
            <person name="Shibanuma M."/>
            <person name="Kim-Kaneyama J.-R."/>
            <person name="Sato S."/>
            <person name="Nose K."/>
        </authorList>
    </citation>
    <scope>FUNCTION</scope>
    <scope>INTERACTION WITH SMAD3</scope>
</reference>
<reference key="25">
    <citation type="journal article" date="2005" name="Exp. Cell Res.">
        <title>Tyrosine-phosphorylated Hic-5 inhibits epidermal growth factor-induced lamellipodia formation.</title>
        <authorList>
            <person name="Hetey S.E."/>
            <person name="Lalonde D.P."/>
            <person name="Turner C.E."/>
        </authorList>
    </citation>
    <scope>FUNCTION</scope>
    <scope>MUTAGENESIS OF TYR-38; TYR-60; CYS-369 AND CYS-372</scope>
    <scope>SUBCELLULAR LOCATION</scope>
    <scope>PHOSPHORYLATION AT TYR-38 AND TYR-60</scope>
</reference>
<reference key="26">
    <citation type="journal article" date="2005" name="Genes Dev.">
        <title>Hic-5 regulates an epithelial program mediated by PPARgamma.</title>
        <authorList>
            <person name="Drori S."/>
            <person name="Girnun G.D."/>
            <person name="Tou L."/>
            <person name="Szwaya J.D."/>
            <person name="Mueller E."/>
            <person name="Xia K."/>
            <person name="Shivdasani R.A."/>
            <person name="Spiegelman B.M."/>
        </authorList>
    </citation>
    <scope>FUNCTION</scope>
    <scope>INTERACTION WITH PPARG</scope>
    <scope>DEVELOPMENTAL STAGE</scope>
</reference>
<reference key="27">
    <citation type="journal article" date="2005" name="J. Cell Sci.">
        <title>Uni-axial stretching regulates intracellular localization of Hic-5 expressed in smooth-muscle cells in vivo.</title>
        <authorList>
            <person name="Kim-Kaneyama J.-R."/>
            <person name="Suzuki W."/>
            <person name="Ichikawa K."/>
            <person name="Ohki T."/>
            <person name="Kohno Y."/>
            <person name="Sata M."/>
            <person name="Nose K."/>
            <person name="Shibanuma M."/>
        </authorList>
    </citation>
    <scope>FUNCTION</scope>
    <scope>TISSUE SPECIFICITY</scope>
    <scope>SUBCELLULAR LOCATION</scope>
    <scope>INTERACTION WITH CRIP2</scope>
</reference>
<reference key="28">
    <citation type="journal article" date="2005" name="J. Cell Sci.">
        <title>Regulation of paxillin family members during epithelial-mesenchymal transformation: a putative role for paxillin delta.</title>
        <authorList>
            <person name="Tumbarello D.A."/>
            <person name="Brown M.C."/>
            <person name="Hetey S.E."/>
            <person name="Turner C.E."/>
        </authorList>
    </citation>
    <scope>INDUCTION</scope>
    <scope>TISSUE SPECIFICITY</scope>
</reference>
<reference key="29">
    <citation type="journal article" date="2006" name="J. Biol. Chem.">
        <title>HIC-5 is a novel repressor of lymphoid enhancer factor/T-cell factor-driven transcription.</title>
        <authorList>
            <person name="Ghogomu S.M."/>
            <person name="van Venrooy S."/>
            <person name="Ritthaler M."/>
            <person name="Wedlich D."/>
            <person name="Gradl D."/>
        </authorList>
    </citation>
    <scope>FUNCTION</scope>
    <scope>INTERACTION WITH TCF3 AND TCF7L2</scope>
</reference>
<reference key="30">
    <citation type="journal article" date="2006" name="J. Biol. Chem.">
        <title>ERK8 down-regulates transactivation of the glucocorticoid receptor through Hic-5.</title>
        <authorList>
            <person name="Saelzler M.P."/>
            <person name="Spackman C.C."/>
            <person name="Liu Y."/>
            <person name="Martinez L.C."/>
            <person name="Harris J.P."/>
            <person name="Abe M.K."/>
        </authorList>
    </citation>
    <scope>INTERACTION WITH MAPK15</scope>
</reference>
<reference key="31">
    <citation type="journal article" date="2006" name="J. Biol. Chem.">
        <title>Oligomerizing potential of a focal adhesion LIM protein Hic-5 organizing a nuclear-cytoplasmic shuttling complex.</title>
        <authorList>
            <person name="Mori K."/>
            <person name="Asakawa M."/>
            <person name="Hayashi M."/>
            <person name="Imura M."/>
            <person name="Ohki T."/>
            <person name="Hirao E."/>
            <person name="Kim-Kaneyama J.-R."/>
            <person name="Nose K."/>
            <person name="Shibanuma M."/>
        </authorList>
    </citation>
    <scope>FUNCTION</scope>
    <scope>HOMOOLIGOMERIZATION</scope>
    <scope>SUBCELLULAR LOCATION</scope>
    <scope>INTERACTION WITH ILK; LIMS1 AND LIMS2</scope>
</reference>
<reference key="32">
    <citation type="journal article" date="2007" name="Biochem. J.">
        <title>Paxillin family members function as Csk-binding proteins that regulate Lyn activity in human and murine platelets.</title>
        <authorList>
            <person name="Rathore V.B."/>
            <person name="Okada M."/>
            <person name="Newman P.J."/>
            <person name="Newman D.K."/>
        </authorList>
    </citation>
    <scope>FUNCTION</scope>
    <scope>TISSUE SPECIFICITY</scope>
    <scope>PHOSPHORYLATION</scope>
    <scope>INTERACTION WITH CSK</scope>
</reference>
<reference key="33">
    <citation type="journal article" date="2007" name="J. Cell. Physiol.">
        <title>Hic-5 contributes to epithelial-mesenchymal transformation through a RhoA/ROCK-dependent pathway.</title>
        <authorList>
            <person name="Tumbarello D.A."/>
            <person name="Turner C.E."/>
        </authorList>
    </citation>
    <scope>FUNCTION</scope>
</reference>
<reference key="34">
    <citation type="journal article" date="2007" name="Steroids">
        <title>Hic-5/ARA55 a prostate stroma-specific AR coactivator.</title>
        <authorList>
            <person name="Heitzer M.D."/>
            <person name="DeFranco D.B."/>
        </authorList>
    </citation>
    <scope>FUNCTION</scope>
</reference>
<reference key="35">
    <citation type="journal article" date="2010" name="Cell">
        <title>A tissue-specific atlas of mouse protein phosphorylation and expression.</title>
        <authorList>
            <person name="Huttlin E.L."/>
            <person name="Jedrychowski M.P."/>
            <person name="Elias J.E."/>
            <person name="Goswami T."/>
            <person name="Rad R."/>
            <person name="Beausoleil S.A."/>
            <person name="Villen J."/>
            <person name="Haas W."/>
            <person name="Sowa M.E."/>
            <person name="Gygi S.P."/>
        </authorList>
    </citation>
    <scope>PHOSPHORYLATION [LARGE SCALE ANALYSIS] AT SER-68; SER-186; THR-188; SER-194 AND SER-403</scope>
    <scope>IDENTIFICATION BY MASS SPECTROMETRY [LARGE SCALE ANALYSIS]</scope>
    <source>
        <tissue>Brain</tissue>
        <tissue>Brown adipose tissue</tissue>
        <tissue>Heart</tissue>
        <tissue>Kidney</tissue>
        <tissue>Liver</tissue>
        <tissue>Lung</tissue>
        <tissue>Spleen</tissue>
        <tissue>Testis</tissue>
    </source>
</reference>
<organism>
    <name type="scientific">Mus musculus</name>
    <name type="common">Mouse</name>
    <dbReference type="NCBI Taxonomy" id="10090"/>
    <lineage>
        <taxon>Eukaryota</taxon>
        <taxon>Metazoa</taxon>
        <taxon>Chordata</taxon>
        <taxon>Craniata</taxon>
        <taxon>Vertebrata</taxon>
        <taxon>Euteleostomi</taxon>
        <taxon>Mammalia</taxon>
        <taxon>Eutheria</taxon>
        <taxon>Euarchontoglires</taxon>
        <taxon>Glires</taxon>
        <taxon>Rodentia</taxon>
        <taxon>Myomorpha</taxon>
        <taxon>Muroidea</taxon>
        <taxon>Muridae</taxon>
        <taxon>Murinae</taxon>
        <taxon>Mus</taxon>
        <taxon>Mus</taxon>
    </lineage>
</organism>
<keyword id="KW-0007">Acetylation</keyword>
<keyword id="KW-0010">Activator</keyword>
<keyword id="KW-0025">Alternative splicing</keyword>
<keyword id="KW-0965">Cell junction</keyword>
<keyword id="KW-0963">Cytoplasm</keyword>
<keyword id="KW-0206">Cytoskeleton</keyword>
<keyword id="KW-0221">Differentiation</keyword>
<keyword id="KW-0440">LIM domain</keyword>
<keyword id="KW-0479">Metal-binding</keyword>
<keyword id="KW-0539">Nucleus</keyword>
<keyword id="KW-0597">Phosphoprotein</keyword>
<keyword id="KW-1185">Reference proteome</keyword>
<keyword id="KW-0677">Repeat</keyword>
<keyword id="KW-0879">Wnt signaling pathway</keyword>
<keyword id="KW-0862">Zinc</keyword>
<name>TGFI1_MOUSE</name>
<sequence>MEDLDALLSDLETTTSHMSRLGAPKERPPETLTPPPPYGHQPQTGSGESSGTTGDKDHLYSTVCKPRSPKPVAPVAPPFSSSSGVLGNGLCELDRLLQELNATQFNITDEIMSQFPSSKMAEGEEKEDQSEDKSSPTVPPSPFPAPSKPSATSATQELDRLMASLSDFRVQNHLPASGPPQPPAASPTREGCPSPPGQTSKGSLDTMLGLLQSDLSRRGVPTQAKGLCGSCNKPIAGQVVTALGRAWHPEHFLCSGCSTTLGGSSFFEKDGAPFCPECYFERFSPRCGFCNQPIRHKMVTALGTHWHPEHFCCVSCGEPFGEEGFHEREGRPYCRRDFLQLFAPRCQGCQGPILDNYISALSALWHPDCFVCRECLAPFSGGSFFEHEGRPLCENHFHAQRGSLCATCGLPVTGRCVSALGRRFHPDHFTCTFCLRPLTKGSFQERASKPYCQPCFLKLFG</sequence>
<evidence type="ECO:0000250" key="1"/>
<evidence type="ECO:0000250" key="2">
    <source>
        <dbReference type="UniProtKB" id="O43294"/>
    </source>
</evidence>
<evidence type="ECO:0000250" key="3">
    <source>
        <dbReference type="UniProtKB" id="Q99PD6"/>
    </source>
</evidence>
<evidence type="ECO:0000255" key="4">
    <source>
        <dbReference type="PROSITE-ProRule" id="PRU00125"/>
    </source>
</evidence>
<evidence type="ECO:0000256" key="5">
    <source>
        <dbReference type="SAM" id="MobiDB-lite"/>
    </source>
</evidence>
<evidence type="ECO:0000269" key="6">
    <source>
    </source>
</evidence>
<evidence type="ECO:0000269" key="7">
    <source>
    </source>
</evidence>
<evidence type="ECO:0000269" key="8">
    <source>
    </source>
</evidence>
<evidence type="ECO:0000269" key="9">
    <source>
    </source>
</evidence>
<evidence type="ECO:0000269" key="10">
    <source>
    </source>
</evidence>
<evidence type="ECO:0000269" key="11">
    <source>
    </source>
</evidence>
<evidence type="ECO:0000269" key="12">
    <source>
    </source>
</evidence>
<evidence type="ECO:0000269" key="13">
    <source>
    </source>
</evidence>
<evidence type="ECO:0000269" key="14">
    <source>
    </source>
</evidence>
<evidence type="ECO:0000269" key="15">
    <source>
    </source>
</evidence>
<evidence type="ECO:0000269" key="16">
    <source>
    </source>
</evidence>
<evidence type="ECO:0000269" key="17">
    <source>
    </source>
</evidence>
<evidence type="ECO:0000269" key="18">
    <source>
    </source>
</evidence>
<evidence type="ECO:0000269" key="19">
    <source>
    </source>
</evidence>
<evidence type="ECO:0000269" key="20">
    <source>
    </source>
</evidence>
<evidence type="ECO:0000269" key="21">
    <source>
    </source>
</evidence>
<evidence type="ECO:0000269" key="22">
    <source>
    </source>
</evidence>
<evidence type="ECO:0000269" key="23">
    <source>
    </source>
</evidence>
<evidence type="ECO:0000269" key="24">
    <source>
    </source>
</evidence>
<evidence type="ECO:0000269" key="25">
    <source>
    </source>
</evidence>
<evidence type="ECO:0000269" key="26">
    <source>
    </source>
</evidence>
<evidence type="ECO:0000269" key="27">
    <source>
    </source>
</evidence>
<evidence type="ECO:0000269" key="28">
    <source>
    </source>
</evidence>
<evidence type="ECO:0000269" key="29">
    <source>
    </source>
</evidence>
<evidence type="ECO:0000269" key="30">
    <source>
    </source>
</evidence>
<evidence type="ECO:0000269" key="31">
    <source>
    </source>
</evidence>
<evidence type="ECO:0000269" key="32">
    <source>
    </source>
</evidence>
<evidence type="ECO:0000269" key="33">
    <source>
    </source>
</evidence>
<evidence type="ECO:0000269" key="34">
    <source>
    </source>
</evidence>
<evidence type="ECO:0000269" key="35">
    <source>
    </source>
</evidence>
<evidence type="ECO:0000269" key="36">
    <source>
    </source>
</evidence>
<evidence type="ECO:0000303" key="37">
    <source>
    </source>
</evidence>
<evidence type="ECO:0000303" key="38">
    <source>
    </source>
</evidence>
<evidence type="ECO:0000303" key="39">
    <source>
    </source>
</evidence>
<evidence type="ECO:0000303" key="40">
    <source>
    </source>
</evidence>
<evidence type="ECO:0000305" key="41"/>
<evidence type="ECO:0007744" key="42">
    <source>
    </source>
</evidence>
<comment type="function">
    <text evidence="8 9 12 13 16 17 20 21 22 23 26 28 29 30 31 32 34">Functions as a molecular adapter coordinating multiple protein-protein interactions at the focal adhesion complex and in the nucleus. Links various intracellular signaling modules to plasma membrane receptors and regulates the Wnt and TGFB signaling pathways. May also regulate SLC6A3 and SLC6A4 targeting to the plasma membrane hence regulating their activity. In the nucleus, functions as a nuclear receptor coactivator regulating glucocorticoid, androgen, mineralocorticoid and progesterone receptor transcriptional activity. May play a role in the processes of cell growth, proliferation, migration, differentiation and senescence. May have a zinc-dependent DNA-binding activity.</text>
</comment>
<comment type="subunit">
    <text evidence="2 3 6 7 8 9 10 13 14 15 17 18 20 21 22 26 27 28 30 33 35 36">Homooligomer (PubMed:16737959). Interacts with PPARG (PubMed:15687259). Interacts with TRAF4 (By similarity). Interacts with CRIP2 (PubMed:15713747). Interacts with HSPB1 (PubMed:11546764). Interacts with ILK (PubMed:16737959). Interacts with LIMS1 and LIMS2 (PubMed:16737959). Interacts with NCK2 (PubMed:10330411). Interacts with NUDT16L1 (PubMed:11805099). Interacts with PAK (PubMed:10330411). Interacts with PTPN12 (PubMed:10092676). Interacts with TCF3 (PubMed:16291758). Interacts with TCF7L2 (PubMed:16291758). Interacts with VCL (PubMed:9858471). Interacts (via LD motif 3) with GIT1 (PubMed:12153727). Also interacts with GIT2 (PubMed:10330411). Forms a complex with ARHGEF7 (PubMed:10330411, PubMed:12153727). Interacts with AR/androgen receptor in a ligand-dependent manner (PubMed:11779876). Interacts with CSK (PubMed:17233630, PubMed:9858471). Interacts with PTK2/FAK1 and PTK2B/PYK2 (PubMed:10330411, PubMed:10649439, PubMed:9422762, PubMed:9756887, PubMed:9858471). Interacts with SLC6A3 (PubMed:12177201). Interacts with SLC6A4 (By similarity). Interacts with NR3C1 (PubMed:10848625). Interacts with SMAD3 (PubMed:14755691). Interacts with MAPK15 (PubMed:16624805). Interacts with SRC (By similarity). Interacts with LYN (By similarity). Interacts with talin (By similarity). Interacts (via LIM zinc-binding domain 2) with CBLC (via RING-type zinc finger); the interaction is direct and enhances CBLC E3 ubiquitin-protein ligase activity (By similarity). Interacts with PARVA (PubMed:11134073). Interacts with PXN (By similarity).</text>
</comment>
<comment type="interaction">
    <interactant intactId="EBI-642844">
        <id>Q62219</id>
    </interactant>
    <interactant intactId="EBI-6512409">
        <id>Q8C115</id>
        <label>Plekhh2</label>
    </interactant>
    <organismsDiffer>false</organismsDiffer>
    <experiments>3</experiments>
</comment>
<comment type="interaction">
    <interactant intactId="EBI-642844">
        <id>Q62219</id>
    </interactant>
    <interactant intactId="EBI-702142">
        <id>Q05397</id>
        <label>PTK2</label>
    </interactant>
    <organismsDiffer>true</organismsDiffer>
    <experiments>3</experiments>
</comment>
<comment type="subcellular location">
    <subcellularLocation>
        <location>Cell junction</location>
        <location>Focal adhesion</location>
    </subcellularLocation>
    <subcellularLocation>
        <location>Nucleus matrix</location>
    </subcellularLocation>
    <subcellularLocation>
        <location>Cytoplasm</location>
        <location>Cytoskeleton</location>
    </subcellularLocation>
    <text>Associated with the actin cytoskeleton, colocalizes with stress fibers.</text>
</comment>
<comment type="alternative products">
    <event type="alternative splicing"/>
    <isoform>
        <id>Q62219-1</id>
        <name>1</name>
        <name>Alpha</name>
        <sequence type="displayed"/>
    </isoform>
    <isoform>
        <id>Q62219-2</id>
        <name>2</name>
        <name>Beta</name>
        <sequence type="described" ref="VSP_026191"/>
    </isoform>
    <isoform>
        <id>Q62219-3</id>
        <name>3</name>
        <name>Alpha-B</name>
        <sequence type="described" ref="VSP_026190"/>
    </isoform>
    <isoform>
        <id>Q62219-4</id>
        <name>4</name>
        <name>Alpha-E</name>
        <sequence type="described" ref="VSP_026193"/>
    </isoform>
    <isoform>
        <id>Q62219-5</id>
        <name>5</name>
        <name>Beta-G</name>
        <sequence type="described" ref="VSP_026189 VSP_026192"/>
    </isoform>
    <isoform>
        <id>Q62219-6</id>
        <name>6</name>
        <name>Alpha-C</name>
        <sequence type="described" ref="VSP_039813 VSP_039814"/>
    </isoform>
    <isoform>
        <id>Q62219-7</id>
        <name>7</name>
        <name>Beta-B</name>
        <name>Beta-D</name>
        <sequence type="described" ref="VSP_026184"/>
    </isoform>
    <isoform>
        <id>Q62219-8</id>
        <name>8</name>
        <name>Beta-C</name>
        <sequence type="described" ref="VSP_026191 VSP_039813 VSP_039814"/>
    </isoform>
    <isoform>
        <id>Q62219-9</id>
        <name>9</name>
        <name>Beta-E</name>
        <name>Beta-F</name>
        <sequence type="described" ref="VSP_026188 VSP_026194"/>
    </isoform>
    <isoform>
        <id>Q62219-10</id>
        <name>10</name>
        <name>Alpha-D</name>
        <sequence type="described" ref="VSP_026185 VSP_026197"/>
    </isoform>
</comment>
<comment type="tissue specificity">
    <text evidence="18 22 24 25 30 32">Ubiquitously expressed. Higher expression is detected in lung and spleen. Expression decreases during pregnancy in mammary glands. Expressed in all brain areas, with higher levels in cerebellum, prefrontal cortex and hypothalamus. Expressed in smooth muscle, myoepithelial cells and platelets (at protein level). Preferentially expressed in mesenchymal versus epithelial cells (at protein level).</text>
</comment>
<comment type="developmental stage">
    <text evidence="11 16 21">First detected in the developing heart tube at 8.0 dpc and then in cardiac, skeletal and smooth muscle during early stages of development. Highly expressed in differentiating gut epithelial cells.</text>
</comment>
<comment type="induction">
    <text evidence="25 32">Up-regulated during epithelial to mesenchymal transformation. Up-regulated by TGFB1 and hydrogen peroxide.</text>
</comment>
<comment type="domain">
    <text>The LIM zinc-binding domains mediate glucocorticoid receptor coactivation and interaction with AR, CRIP2, ILK, LIMS1, NR3C1, PPARG, TCF3, TCF7L2, SLC6A3 and SMAD3. The LIM zinc-binding 2 and LIM zinc-binding 3 domains mediate targeting to focal adhesions and actin stress fibers. The LIM zinc-binding 3 and LIM zinc-binding 4 domains mediate interaction with TRAF4 and MAPK15. The LIM zinc-binding 4 domain mediates interaction with HSPB1, homooligomerization and targeting to the nuclear matrix. The LIM zinc-binding 3 domain mediates interaction with PTPN12.</text>
</comment>
<comment type="domain">
    <text>The LD (leucine and aspartate-rich) motif 3 mediates interaction with GIT1 and functions as a nuclear export signal.</text>
</comment>
<comment type="PTM">
    <text evidence="1">Phosphorylated by gonadotropin-releasing hormone-activated SRC.</text>
</comment>
<comment type="miscellaneous">
    <molecule>Isoform 1</molecule>
    <text>Transcripts of the alpha group are more abundantly expressed.</text>
</comment>
<comment type="miscellaneous">
    <molecule>Isoform 3</molecule>
    <text evidence="41">Transcripts of the alpha group are more abundantly expressed.</text>
</comment>
<comment type="miscellaneous">
    <molecule>Isoform 4</molecule>
    <text evidence="41">Transcripts of the alpha group are more abundantly expressed.</text>
</comment>
<comment type="miscellaneous">
    <molecule>Isoform 6</molecule>
    <text evidence="41">Transcripts of the alpha group are more abundantly expressed. May be produced at very low levels due to a premature stop codon in the mRNA, leading to nonsense-mediated mRNA decay.</text>
</comment>
<comment type="miscellaneous">
    <molecule>Isoform 8</molecule>
    <text evidence="41">May be produced at very low levels due to a premature stop codon in the mRNA, leading to nonsense-mediated mRNA decay.</text>
</comment>
<comment type="miscellaneous">
    <molecule>Isoform 10</molecule>
    <text evidence="41">Transcripts of the alpha group are more abundantly expressed.</text>
</comment>
<comment type="similarity">
    <text evidence="41">Belongs to the paxillin family.</text>
</comment>
<comment type="sequence caution" evidence="41">
    <conflict type="erroneous initiation">
        <sequence resource="EMBL-CDS" id="AAH02049"/>
    </conflict>
    <text>Truncated N-terminus.</text>
</comment>
<comment type="sequence caution" evidence="41">
    <conflict type="frameshift">
        <sequence resource="EMBL-CDS" id="AAZ82195"/>
    </conflict>
</comment>
<comment type="sequence caution" evidence="41">
    <conflict type="erroneous translation">
        <sequence resource="EMBL-CDS" id="AAZ82200"/>
    </conflict>
    <text>Wrong choice of CDS.</text>
</comment>
<comment type="sequence caution" evidence="41">
    <conflict type="erroneous initiation">
        <sequence resource="EMBL-CDS" id="BAE33707"/>
    </conflict>
    <text>Truncated N-terminus.</text>
</comment>
<comment type="sequence caution" evidence="41">
    <conflict type="erroneous translation">
        <sequence resource="EMBL-CDS" id="BAE34493"/>
    </conflict>
    <text>Wrong choice of CDS.</text>
</comment>
<dbReference type="EMBL" id="L22482">
    <property type="protein sequence ID" value="AAA62226.1"/>
    <property type="molecule type" value="mRNA"/>
</dbReference>
<dbReference type="EMBL" id="AF083064">
    <property type="protein sequence ID" value="AAD51090.1"/>
    <property type="molecule type" value="Genomic_DNA"/>
</dbReference>
<dbReference type="EMBL" id="DQ143891">
    <property type="protein sequence ID" value="AAZ82195.1"/>
    <property type="status" value="ALT_FRAME"/>
    <property type="molecule type" value="mRNA"/>
</dbReference>
<dbReference type="EMBL" id="DQ143892">
    <property type="protein sequence ID" value="AAZ82196.1"/>
    <property type="molecule type" value="mRNA"/>
</dbReference>
<dbReference type="EMBL" id="DQ143893">
    <property type="protein sequence ID" value="AAZ82197.1"/>
    <property type="molecule type" value="mRNA"/>
</dbReference>
<dbReference type="EMBL" id="DQ143894">
    <property type="protein sequence ID" value="AAZ82198.1"/>
    <property type="molecule type" value="mRNA"/>
</dbReference>
<dbReference type="EMBL" id="DQ143895">
    <property type="protein sequence ID" value="AAZ82199.1"/>
    <property type="molecule type" value="mRNA"/>
</dbReference>
<dbReference type="EMBL" id="DQ143896">
    <property type="protein sequence ID" value="AAZ82200.1"/>
    <property type="status" value="ALT_SEQ"/>
    <property type="molecule type" value="mRNA"/>
</dbReference>
<dbReference type="EMBL" id="DQ143897">
    <property type="protein sequence ID" value="AAZ82201.1"/>
    <property type="molecule type" value="mRNA"/>
</dbReference>
<dbReference type="EMBL" id="DQ143898">
    <property type="protein sequence ID" value="AAZ82202.1"/>
    <property type="molecule type" value="mRNA"/>
</dbReference>
<dbReference type="EMBL" id="DQ143899">
    <property type="protein sequence ID" value="AAZ82203.1"/>
    <property type="molecule type" value="mRNA"/>
</dbReference>
<dbReference type="EMBL" id="DQ143900">
    <property type="protein sequence ID" value="AAZ82204.1"/>
    <property type="molecule type" value="mRNA"/>
</dbReference>
<dbReference type="EMBL" id="AK156423">
    <property type="protein sequence ID" value="BAE33707.1"/>
    <property type="status" value="ALT_INIT"/>
    <property type="molecule type" value="mRNA"/>
</dbReference>
<dbReference type="EMBL" id="AK158409">
    <property type="protein sequence ID" value="BAE34493.1"/>
    <property type="status" value="ALT_SEQ"/>
    <property type="molecule type" value="mRNA"/>
</dbReference>
<dbReference type="EMBL" id="BC002049">
    <property type="protein sequence ID" value="AAH02049.1"/>
    <property type="status" value="ALT_INIT"/>
    <property type="molecule type" value="mRNA"/>
</dbReference>
<dbReference type="EMBL" id="BC056362">
    <property type="protein sequence ID" value="AAH56362.1"/>
    <property type="molecule type" value="mRNA"/>
</dbReference>
<dbReference type="CCDS" id="CCDS21893.2">
    <molecule id="Q62219-1"/>
</dbReference>
<dbReference type="CCDS" id="CCDS80812.1">
    <molecule id="Q62219-7"/>
</dbReference>
<dbReference type="PIR" id="A55071">
    <property type="entry name" value="A55071"/>
</dbReference>
<dbReference type="RefSeq" id="NP_001276479.1">
    <molecule id="Q62219-1"/>
    <property type="nucleotide sequence ID" value="NM_001289550.2"/>
</dbReference>
<dbReference type="RefSeq" id="NP_001276481.1">
    <property type="nucleotide sequence ID" value="NM_001289552.1"/>
</dbReference>
<dbReference type="RefSeq" id="NP_001276482.1">
    <molecule id="Q62219-7"/>
    <property type="nucleotide sequence ID" value="NM_001289553.2"/>
</dbReference>
<dbReference type="RefSeq" id="NP_001404261.1">
    <molecule id="Q62219-7"/>
    <property type="nucleotide sequence ID" value="NM_001417332.1"/>
</dbReference>
<dbReference type="RefSeq" id="NP_001404262.1">
    <molecule id="Q62219-7"/>
    <property type="nucleotide sequence ID" value="NM_001417333.1"/>
</dbReference>
<dbReference type="RefSeq" id="XP_006507630.1">
    <property type="nucleotide sequence ID" value="XM_006507567.2"/>
</dbReference>
<dbReference type="SMR" id="Q62219"/>
<dbReference type="BioGRID" id="204158">
    <property type="interactions" value="7"/>
</dbReference>
<dbReference type="CORUM" id="Q62219"/>
<dbReference type="FunCoup" id="Q62219">
    <property type="interactions" value="183"/>
</dbReference>
<dbReference type="IntAct" id="Q62219">
    <property type="interactions" value="5"/>
</dbReference>
<dbReference type="STRING" id="10090.ENSMUSP00000132100"/>
<dbReference type="GlyGen" id="Q62219">
    <property type="glycosylation" value="1 site, 1 O-linked glycan (1 site)"/>
</dbReference>
<dbReference type="iPTMnet" id="Q62219"/>
<dbReference type="PhosphoSitePlus" id="Q62219"/>
<dbReference type="SwissPalm" id="Q62219"/>
<dbReference type="jPOST" id="Q62219"/>
<dbReference type="PaxDb" id="10090-ENSMUSP00000068529"/>
<dbReference type="PeptideAtlas" id="Q62219"/>
<dbReference type="ProteomicsDB" id="263042">
    <molecule id="Q62219-1"/>
</dbReference>
<dbReference type="ProteomicsDB" id="263043">
    <molecule id="Q62219-2"/>
</dbReference>
<dbReference type="ProteomicsDB" id="263044">
    <molecule id="Q62219-3"/>
</dbReference>
<dbReference type="ProteomicsDB" id="263045">
    <molecule id="Q62219-4"/>
</dbReference>
<dbReference type="ProteomicsDB" id="263046">
    <molecule id="Q62219-5"/>
</dbReference>
<dbReference type="ProteomicsDB" id="263047">
    <molecule id="Q62219-6"/>
</dbReference>
<dbReference type="ProteomicsDB" id="263048">
    <molecule id="Q62219-7"/>
</dbReference>
<dbReference type="ProteomicsDB" id="263049">
    <molecule id="Q62219-8"/>
</dbReference>
<dbReference type="ProteomicsDB" id="263050">
    <molecule id="Q62219-9"/>
</dbReference>
<dbReference type="ProteomicsDB" id="263051">
    <molecule id="Q62219-10"/>
</dbReference>
<dbReference type="Pumba" id="Q62219"/>
<dbReference type="Antibodypedia" id="1738">
    <property type="antibodies" value="256 antibodies from 30 providers"/>
</dbReference>
<dbReference type="DNASU" id="21804"/>
<dbReference type="Ensembl" id="ENSMUST00000070656.12">
    <molecule id="Q62219-2"/>
    <property type="protein sequence ID" value="ENSMUSP00000068529.6"/>
    <property type="gene ID" value="ENSMUSG00000030782.18"/>
</dbReference>
<dbReference type="Ensembl" id="ENSMUST00000164710.8">
    <molecule id="Q62219-3"/>
    <property type="protein sequence ID" value="ENSMUSP00000130964.2"/>
    <property type="gene ID" value="ENSMUSG00000030782.18"/>
</dbReference>
<dbReference type="Ensembl" id="ENSMUST00000167965.8">
    <molecule id="Q62219-1"/>
    <property type="protein sequence ID" value="ENSMUSP00000132100.2"/>
    <property type="gene ID" value="ENSMUSG00000030782.18"/>
</dbReference>
<dbReference type="Ensembl" id="ENSMUST00000169919.8">
    <molecule id="Q62219-6"/>
    <property type="protein sequence ID" value="ENSMUSP00000131705.2"/>
    <property type="gene ID" value="ENSMUSG00000030782.18"/>
</dbReference>
<dbReference type="GeneID" id="21804"/>
<dbReference type="KEGG" id="mmu:21804"/>
<dbReference type="UCSC" id="uc009jyl.3">
    <molecule id="Q62219-1"/>
    <property type="organism name" value="mouse"/>
</dbReference>
<dbReference type="UCSC" id="uc009jyo.2">
    <molecule id="Q62219-4"/>
    <property type="organism name" value="mouse"/>
</dbReference>
<dbReference type="AGR" id="MGI:102784"/>
<dbReference type="CTD" id="7041"/>
<dbReference type="MGI" id="MGI:102784">
    <property type="gene designation" value="Tgfb1i1"/>
</dbReference>
<dbReference type="VEuPathDB" id="HostDB:ENSMUSG00000030782"/>
<dbReference type="eggNOG" id="KOG1703">
    <property type="taxonomic scope" value="Eukaryota"/>
</dbReference>
<dbReference type="GeneTree" id="ENSGT00940000160447"/>
<dbReference type="HOGENOM" id="CLU_2922022_0_0_1"/>
<dbReference type="InParanoid" id="Q62219"/>
<dbReference type="OMA" id="YCPECYF"/>
<dbReference type="OrthoDB" id="15567at2759"/>
<dbReference type="PhylomeDB" id="Q62219"/>
<dbReference type="TreeFam" id="TF314113"/>
<dbReference type="BioGRID-ORCS" id="21804">
    <property type="hits" value="2 hits in 80 CRISPR screens"/>
</dbReference>
<dbReference type="PRO" id="PR:Q62219"/>
<dbReference type="Proteomes" id="UP000000589">
    <property type="component" value="Chromosome 7"/>
</dbReference>
<dbReference type="RNAct" id="Q62219">
    <property type="molecule type" value="protein"/>
</dbReference>
<dbReference type="Bgee" id="ENSMUSG00000030782">
    <property type="expression patterns" value="Expressed in ascending aorta and 245 other cell types or tissues"/>
</dbReference>
<dbReference type="ExpressionAtlas" id="Q62219">
    <property type="expression patterns" value="baseline and differential"/>
</dbReference>
<dbReference type="GO" id="GO:0005856">
    <property type="term" value="C:cytoskeleton"/>
    <property type="evidence" value="ECO:0007669"/>
    <property type="project" value="UniProtKB-SubCell"/>
</dbReference>
<dbReference type="GO" id="GO:0005829">
    <property type="term" value="C:cytosol"/>
    <property type="evidence" value="ECO:0007669"/>
    <property type="project" value="Ensembl"/>
</dbReference>
<dbReference type="GO" id="GO:0005925">
    <property type="term" value="C:focal adhesion"/>
    <property type="evidence" value="ECO:0000314"/>
    <property type="project" value="MGI"/>
</dbReference>
<dbReference type="GO" id="GO:0016363">
    <property type="term" value="C:nuclear matrix"/>
    <property type="evidence" value="ECO:0007669"/>
    <property type="project" value="UniProtKB-SubCell"/>
</dbReference>
<dbReference type="GO" id="GO:0070411">
    <property type="term" value="F:I-SMAD binding"/>
    <property type="evidence" value="ECO:0007669"/>
    <property type="project" value="Ensembl"/>
</dbReference>
<dbReference type="GO" id="GO:0046872">
    <property type="term" value="F:metal ion binding"/>
    <property type="evidence" value="ECO:0007669"/>
    <property type="project" value="UniProtKB-KW"/>
</dbReference>
<dbReference type="GO" id="GO:0050681">
    <property type="term" value="F:nuclear androgen receptor binding"/>
    <property type="evidence" value="ECO:0007669"/>
    <property type="project" value="Ensembl"/>
</dbReference>
<dbReference type="GO" id="GO:0048495">
    <property type="term" value="F:Roundabout binding"/>
    <property type="evidence" value="ECO:0007669"/>
    <property type="project" value="Ensembl"/>
</dbReference>
<dbReference type="GO" id="GO:0003713">
    <property type="term" value="F:transcription coactivator activity"/>
    <property type="evidence" value="ECO:0000250"/>
    <property type="project" value="UniProtKB"/>
</dbReference>
<dbReference type="GO" id="GO:0045165">
    <property type="term" value="P:cell fate commitment"/>
    <property type="evidence" value="ECO:0000316"/>
    <property type="project" value="MGI"/>
</dbReference>
<dbReference type="GO" id="GO:0030855">
    <property type="term" value="P:epithelial cell differentiation"/>
    <property type="evidence" value="ECO:0000316"/>
    <property type="project" value="MGI"/>
</dbReference>
<dbReference type="GO" id="GO:0045444">
    <property type="term" value="P:fat cell differentiation"/>
    <property type="evidence" value="ECO:0000316"/>
    <property type="project" value="MGI"/>
</dbReference>
<dbReference type="GO" id="GO:0016331">
    <property type="term" value="P:morphogenesis of embryonic epithelium"/>
    <property type="evidence" value="ECO:0000315"/>
    <property type="project" value="MGI"/>
</dbReference>
<dbReference type="GO" id="GO:0045599">
    <property type="term" value="P:negative regulation of fat cell differentiation"/>
    <property type="evidence" value="ECO:0000316"/>
    <property type="project" value="MGI"/>
</dbReference>
<dbReference type="GO" id="GO:0010718">
    <property type="term" value="P:positive regulation of epithelial to mesenchymal transition"/>
    <property type="evidence" value="ECO:0007669"/>
    <property type="project" value="Ensembl"/>
</dbReference>
<dbReference type="GO" id="GO:0030511">
    <property type="term" value="P:positive regulation of transforming growth factor beta receptor signaling pathway"/>
    <property type="evidence" value="ECO:0007669"/>
    <property type="project" value="Ensembl"/>
</dbReference>
<dbReference type="GO" id="GO:2000060">
    <property type="term" value="P:positive regulation of ubiquitin-dependent protein catabolic process"/>
    <property type="evidence" value="ECO:0007669"/>
    <property type="project" value="Ensembl"/>
</dbReference>
<dbReference type="GO" id="GO:0016055">
    <property type="term" value="P:Wnt signaling pathway"/>
    <property type="evidence" value="ECO:0007669"/>
    <property type="project" value="UniProtKB-KW"/>
</dbReference>
<dbReference type="CDD" id="cd09336">
    <property type="entry name" value="LIM1_Paxillin_like"/>
    <property type="match status" value="1"/>
</dbReference>
<dbReference type="CDD" id="cd09337">
    <property type="entry name" value="LIM2_Paxillin_like"/>
    <property type="match status" value="1"/>
</dbReference>
<dbReference type="CDD" id="cd09412">
    <property type="entry name" value="LIM4_Leupaxin"/>
    <property type="match status" value="1"/>
</dbReference>
<dbReference type="FunFam" id="2.10.110.10:FF:000008">
    <property type="entry name" value="Paxillin isoform 1"/>
    <property type="match status" value="1"/>
</dbReference>
<dbReference type="FunFam" id="2.10.110.10:FF:000009">
    <property type="entry name" value="Paxillin isoform 1"/>
    <property type="match status" value="1"/>
</dbReference>
<dbReference type="FunFam" id="2.10.110.10:FF:000012">
    <property type="entry name" value="Paxillin isoform 1"/>
    <property type="match status" value="1"/>
</dbReference>
<dbReference type="FunFam" id="2.10.110.10:FF:000018">
    <property type="entry name" value="Paxillin isoform 1"/>
    <property type="match status" value="1"/>
</dbReference>
<dbReference type="Gene3D" id="2.10.110.10">
    <property type="entry name" value="Cysteine Rich Protein"/>
    <property type="match status" value="4"/>
</dbReference>
<dbReference type="InterPro" id="IPR047075">
    <property type="entry name" value="Paxillin_TGFB1I1_LIM_dom1"/>
</dbReference>
<dbReference type="InterPro" id="IPR050604">
    <property type="entry name" value="PDZ-LIM_domain"/>
</dbReference>
<dbReference type="InterPro" id="IPR017305">
    <property type="entry name" value="Tgfb1i1/Leupaxin/TGFB1I1"/>
</dbReference>
<dbReference type="InterPro" id="IPR001781">
    <property type="entry name" value="Znf_LIM"/>
</dbReference>
<dbReference type="PANTHER" id="PTHR24214:SF62">
    <property type="entry name" value="LEUPAXIN"/>
    <property type="match status" value="1"/>
</dbReference>
<dbReference type="PANTHER" id="PTHR24214">
    <property type="entry name" value="PDZ AND LIM DOMAIN PROTEIN ZASP"/>
    <property type="match status" value="1"/>
</dbReference>
<dbReference type="Pfam" id="PF00412">
    <property type="entry name" value="LIM"/>
    <property type="match status" value="4"/>
</dbReference>
<dbReference type="Pfam" id="PF03535">
    <property type="entry name" value="Paxillin"/>
    <property type="match status" value="1"/>
</dbReference>
<dbReference type="PIRSF" id="PIRSF037881">
    <property type="entry name" value="Leupaxin"/>
    <property type="match status" value="1"/>
</dbReference>
<dbReference type="SMART" id="SM00132">
    <property type="entry name" value="LIM"/>
    <property type="match status" value="4"/>
</dbReference>
<dbReference type="SUPFAM" id="SSF57716">
    <property type="entry name" value="Glucocorticoid receptor-like (DNA-binding domain)"/>
    <property type="match status" value="5"/>
</dbReference>
<dbReference type="PROSITE" id="PS00478">
    <property type="entry name" value="LIM_DOMAIN_1"/>
    <property type="match status" value="4"/>
</dbReference>
<dbReference type="PROSITE" id="PS50023">
    <property type="entry name" value="LIM_DOMAIN_2"/>
    <property type="match status" value="4"/>
</dbReference>